<reference key="1">
    <citation type="journal article" date="2004" name="Nat. Biotechnol.">
        <title>The genome sequence of the extreme thermophile Thermus thermophilus.</title>
        <authorList>
            <person name="Henne A."/>
            <person name="Brueggemann H."/>
            <person name="Raasch C."/>
            <person name="Wiezer A."/>
            <person name="Hartsch T."/>
            <person name="Liesegang H."/>
            <person name="Johann A."/>
            <person name="Lienard T."/>
            <person name="Gohl O."/>
            <person name="Martinez-Arias R."/>
            <person name="Jacobi C."/>
            <person name="Starkuviene V."/>
            <person name="Schlenczeck S."/>
            <person name="Dencker S."/>
            <person name="Huber R."/>
            <person name="Klenk H.-P."/>
            <person name="Kramer W."/>
            <person name="Merkl R."/>
            <person name="Gottschalk G."/>
            <person name="Fritz H.-J."/>
        </authorList>
    </citation>
    <scope>NUCLEOTIDE SEQUENCE [LARGE SCALE GENOMIC DNA]</scope>
    <source>
        <strain>ATCC BAA-163 / DSM 7039 / HB27</strain>
    </source>
</reference>
<feature type="chain" id="PRO_0000101630" description="Ribosomal RNA small subunit methyltransferase A">
    <location>
        <begin position="1"/>
        <end position="271"/>
    </location>
</feature>
<feature type="binding site" evidence="1">
    <location>
        <position position="28"/>
    </location>
    <ligand>
        <name>S-adenosyl-L-methionine</name>
        <dbReference type="ChEBI" id="CHEBI:59789"/>
    </ligand>
</feature>
<feature type="binding site" evidence="1">
    <location>
        <position position="30"/>
    </location>
    <ligand>
        <name>S-adenosyl-L-methionine</name>
        <dbReference type="ChEBI" id="CHEBI:59789"/>
    </ligand>
</feature>
<feature type="binding site" evidence="1">
    <location>
        <position position="54"/>
    </location>
    <ligand>
        <name>S-adenosyl-L-methionine</name>
        <dbReference type="ChEBI" id="CHEBI:59789"/>
    </ligand>
</feature>
<feature type="binding site" evidence="1">
    <location>
        <position position="75"/>
    </location>
    <ligand>
        <name>S-adenosyl-L-methionine</name>
        <dbReference type="ChEBI" id="CHEBI:59789"/>
    </ligand>
</feature>
<feature type="binding site" evidence="1">
    <location>
        <position position="99"/>
    </location>
    <ligand>
        <name>S-adenosyl-L-methionine</name>
        <dbReference type="ChEBI" id="CHEBI:59789"/>
    </ligand>
</feature>
<feature type="binding site" evidence="1">
    <location>
        <position position="117"/>
    </location>
    <ligand>
        <name>S-adenosyl-L-methionine</name>
        <dbReference type="ChEBI" id="CHEBI:59789"/>
    </ligand>
</feature>
<protein>
    <recommendedName>
        <fullName evidence="1">Ribosomal RNA small subunit methyltransferase A</fullName>
        <ecNumber evidence="1">2.1.1.182</ecNumber>
    </recommendedName>
    <alternativeName>
        <fullName evidence="1">16S rRNA (adenine(1518)-N(6)/adenine(1519)-N(6))-dimethyltransferase</fullName>
    </alternativeName>
    <alternativeName>
        <fullName evidence="1">16S rRNA dimethyladenosine transferase</fullName>
    </alternativeName>
    <alternativeName>
        <fullName evidence="1">16S rRNA dimethylase</fullName>
    </alternativeName>
    <alternativeName>
        <fullName evidence="1">S-adenosylmethionine-6-N', N'-adenosyl(rRNA) dimethyltransferase</fullName>
    </alternativeName>
</protein>
<dbReference type="EC" id="2.1.1.182" evidence="1"/>
<dbReference type="EMBL" id="AE017221">
    <property type="protein sequence ID" value="AAS82263.1"/>
    <property type="molecule type" value="Genomic_DNA"/>
</dbReference>
<dbReference type="RefSeq" id="WP_011174273.1">
    <property type="nucleotide sequence ID" value="NC_005835.1"/>
</dbReference>
<dbReference type="SMR" id="Q72GC7"/>
<dbReference type="KEGG" id="tth:TT_C1921"/>
<dbReference type="eggNOG" id="COG0030">
    <property type="taxonomic scope" value="Bacteria"/>
</dbReference>
<dbReference type="HOGENOM" id="CLU_041220_0_1_0"/>
<dbReference type="OrthoDB" id="9814755at2"/>
<dbReference type="Proteomes" id="UP000000592">
    <property type="component" value="Chromosome"/>
</dbReference>
<dbReference type="GO" id="GO:0005829">
    <property type="term" value="C:cytosol"/>
    <property type="evidence" value="ECO:0007669"/>
    <property type="project" value="TreeGrafter"/>
</dbReference>
<dbReference type="GO" id="GO:0052908">
    <property type="term" value="F:16S rRNA (adenine(1518)-N(6)/adenine(1519)-N(6))-dimethyltransferase activity"/>
    <property type="evidence" value="ECO:0007669"/>
    <property type="project" value="UniProtKB-EC"/>
</dbReference>
<dbReference type="GO" id="GO:0003723">
    <property type="term" value="F:RNA binding"/>
    <property type="evidence" value="ECO:0007669"/>
    <property type="project" value="UniProtKB-KW"/>
</dbReference>
<dbReference type="CDD" id="cd02440">
    <property type="entry name" value="AdoMet_MTases"/>
    <property type="match status" value="1"/>
</dbReference>
<dbReference type="Gene3D" id="1.10.8.100">
    <property type="entry name" value="Ribosomal RNA adenine dimethylase-like, domain 2"/>
    <property type="match status" value="1"/>
</dbReference>
<dbReference type="Gene3D" id="3.40.50.150">
    <property type="entry name" value="Vaccinia Virus protein VP39"/>
    <property type="match status" value="1"/>
</dbReference>
<dbReference type="HAMAP" id="MF_00607">
    <property type="entry name" value="16SrRNA_methyltr_A"/>
    <property type="match status" value="1"/>
</dbReference>
<dbReference type="InterPro" id="IPR001737">
    <property type="entry name" value="KsgA/Erm"/>
</dbReference>
<dbReference type="InterPro" id="IPR023165">
    <property type="entry name" value="rRNA_Ade_diMease-like_C"/>
</dbReference>
<dbReference type="InterPro" id="IPR020596">
    <property type="entry name" value="rRNA_Ade_Mease_Trfase_CS"/>
</dbReference>
<dbReference type="InterPro" id="IPR020598">
    <property type="entry name" value="rRNA_Ade_methylase_Trfase_N"/>
</dbReference>
<dbReference type="InterPro" id="IPR011530">
    <property type="entry name" value="rRNA_adenine_dimethylase"/>
</dbReference>
<dbReference type="InterPro" id="IPR029063">
    <property type="entry name" value="SAM-dependent_MTases_sf"/>
</dbReference>
<dbReference type="NCBIfam" id="TIGR00755">
    <property type="entry name" value="ksgA"/>
    <property type="match status" value="1"/>
</dbReference>
<dbReference type="PANTHER" id="PTHR11727">
    <property type="entry name" value="DIMETHYLADENOSINE TRANSFERASE"/>
    <property type="match status" value="1"/>
</dbReference>
<dbReference type="PANTHER" id="PTHR11727:SF7">
    <property type="entry name" value="DIMETHYLADENOSINE TRANSFERASE-RELATED"/>
    <property type="match status" value="1"/>
</dbReference>
<dbReference type="Pfam" id="PF00398">
    <property type="entry name" value="RrnaAD"/>
    <property type="match status" value="1"/>
</dbReference>
<dbReference type="SMART" id="SM00650">
    <property type="entry name" value="rADc"/>
    <property type="match status" value="1"/>
</dbReference>
<dbReference type="SUPFAM" id="SSF53335">
    <property type="entry name" value="S-adenosyl-L-methionine-dependent methyltransferases"/>
    <property type="match status" value="1"/>
</dbReference>
<dbReference type="PROSITE" id="PS01131">
    <property type="entry name" value="RRNA_A_DIMETH"/>
    <property type="match status" value="1"/>
</dbReference>
<dbReference type="PROSITE" id="PS51689">
    <property type="entry name" value="SAM_RNA_A_N6_MT"/>
    <property type="match status" value="1"/>
</dbReference>
<keyword id="KW-0963">Cytoplasm</keyword>
<keyword id="KW-0489">Methyltransferase</keyword>
<keyword id="KW-0694">RNA-binding</keyword>
<keyword id="KW-0698">rRNA processing</keyword>
<keyword id="KW-0949">S-adenosyl-L-methionine</keyword>
<keyword id="KW-0808">Transferase</keyword>
<sequence>MSKLASPQSVRALLERHGLFADKRFGQNFLVSEVHLRRIVEAARPFTGPVFEVGPGLGALTRALLEAGAEVTAIEKDLRLRPVLEETLSGLPVRLVFQDALLYPWEEVPQGSLLVANLPYHIATPLVTRLLKTGRFARLVFLVQKEVAERMTARPKTPAYGVLTLRVAHHAVAERLFDLPPGAFFPPPKVWSSLVRLTPTGAPDDPGLFRLVEAAFGKRRKTLLNALAAAGYPKARVEEALRALGLPPRVRAEELDLEAFRRLREGLEGAV</sequence>
<comment type="function">
    <text evidence="1">Specifically dimethylates two adjacent adenosines (A1518 and A1519) in the loop of a conserved hairpin near the 3'-end of 16S rRNA in the 30S particle. May play a critical role in biogenesis of 30S subunits.</text>
</comment>
<comment type="catalytic activity">
    <reaction evidence="1">
        <text>adenosine(1518)/adenosine(1519) in 16S rRNA + 4 S-adenosyl-L-methionine = N(6)-dimethyladenosine(1518)/N(6)-dimethyladenosine(1519) in 16S rRNA + 4 S-adenosyl-L-homocysteine + 4 H(+)</text>
        <dbReference type="Rhea" id="RHEA:19609"/>
        <dbReference type="Rhea" id="RHEA-COMP:10232"/>
        <dbReference type="Rhea" id="RHEA-COMP:10233"/>
        <dbReference type="ChEBI" id="CHEBI:15378"/>
        <dbReference type="ChEBI" id="CHEBI:57856"/>
        <dbReference type="ChEBI" id="CHEBI:59789"/>
        <dbReference type="ChEBI" id="CHEBI:74411"/>
        <dbReference type="ChEBI" id="CHEBI:74493"/>
        <dbReference type="EC" id="2.1.1.182"/>
    </reaction>
</comment>
<comment type="subcellular location">
    <subcellularLocation>
        <location evidence="1">Cytoplasm</location>
    </subcellularLocation>
</comment>
<comment type="similarity">
    <text evidence="1">Belongs to the class I-like SAM-binding methyltransferase superfamily. rRNA adenine N(6)-methyltransferase family. RsmA subfamily.</text>
</comment>
<evidence type="ECO:0000255" key="1">
    <source>
        <dbReference type="HAMAP-Rule" id="MF_00607"/>
    </source>
</evidence>
<gene>
    <name evidence="1" type="primary">rsmA</name>
    <name evidence="1" type="synonym">ksgA</name>
    <name type="ordered locus">TT_C1921</name>
</gene>
<organism>
    <name type="scientific">Thermus thermophilus (strain ATCC BAA-163 / DSM 7039 / HB27)</name>
    <dbReference type="NCBI Taxonomy" id="262724"/>
    <lineage>
        <taxon>Bacteria</taxon>
        <taxon>Thermotogati</taxon>
        <taxon>Deinococcota</taxon>
        <taxon>Deinococci</taxon>
        <taxon>Thermales</taxon>
        <taxon>Thermaceae</taxon>
        <taxon>Thermus</taxon>
    </lineage>
</organism>
<proteinExistence type="inferred from homology"/>
<name>RSMA_THET2</name>
<accession>Q72GC7</accession>